<gene>
    <name evidence="1" type="primary">lipA</name>
    <name type="ordered locus">Cvib_0857</name>
</gene>
<reference key="1">
    <citation type="submission" date="2007-03" db="EMBL/GenBank/DDBJ databases">
        <title>Complete sequence of Prosthecochloris vibrioformis DSM 265.</title>
        <authorList>
            <consortium name="US DOE Joint Genome Institute"/>
            <person name="Copeland A."/>
            <person name="Lucas S."/>
            <person name="Lapidus A."/>
            <person name="Barry K."/>
            <person name="Detter J.C."/>
            <person name="Glavina del Rio T."/>
            <person name="Hammon N."/>
            <person name="Israni S."/>
            <person name="Pitluck S."/>
            <person name="Schmutz J."/>
            <person name="Larimer F."/>
            <person name="Land M."/>
            <person name="Hauser L."/>
            <person name="Mikhailova N."/>
            <person name="Li T."/>
            <person name="Overmann J."/>
            <person name="Schuster S.C."/>
            <person name="Bryant D.A."/>
            <person name="Richardson P."/>
        </authorList>
    </citation>
    <scope>NUCLEOTIDE SEQUENCE [LARGE SCALE GENOMIC DNA]</scope>
    <source>
        <strain>DSM 265 / 1930</strain>
    </source>
</reference>
<dbReference type="EC" id="2.8.1.8" evidence="1"/>
<dbReference type="EMBL" id="CP000607">
    <property type="protein sequence ID" value="ABP36872.1"/>
    <property type="molecule type" value="Genomic_DNA"/>
</dbReference>
<dbReference type="SMR" id="A4SEG3"/>
<dbReference type="STRING" id="290318.Cvib_0857"/>
<dbReference type="KEGG" id="pvi:Cvib_0857"/>
<dbReference type="eggNOG" id="COG0320">
    <property type="taxonomic scope" value="Bacteria"/>
</dbReference>
<dbReference type="HOGENOM" id="CLU_033144_2_0_10"/>
<dbReference type="OrthoDB" id="9787898at2"/>
<dbReference type="UniPathway" id="UPA00538">
    <property type="reaction ID" value="UER00593"/>
</dbReference>
<dbReference type="GO" id="GO:0005737">
    <property type="term" value="C:cytoplasm"/>
    <property type="evidence" value="ECO:0007669"/>
    <property type="project" value="UniProtKB-SubCell"/>
</dbReference>
<dbReference type="GO" id="GO:0051539">
    <property type="term" value="F:4 iron, 4 sulfur cluster binding"/>
    <property type="evidence" value="ECO:0007669"/>
    <property type="project" value="UniProtKB-UniRule"/>
</dbReference>
<dbReference type="GO" id="GO:0016992">
    <property type="term" value="F:lipoate synthase activity"/>
    <property type="evidence" value="ECO:0007669"/>
    <property type="project" value="UniProtKB-UniRule"/>
</dbReference>
<dbReference type="GO" id="GO:0046872">
    <property type="term" value="F:metal ion binding"/>
    <property type="evidence" value="ECO:0007669"/>
    <property type="project" value="UniProtKB-KW"/>
</dbReference>
<dbReference type="FunFam" id="3.20.20.70:FF:000040">
    <property type="entry name" value="Lipoyl synthase"/>
    <property type="match status" value="1"/>
</dbReference>
<dbReference type="Gene3D" id="3.20.20.70">
    <property type="entry name" value="Aldolase class I"/>
    <property type="match status" value="1"/>
</dbReference>
<dbReference type="HAMAP" id="MF_00206">
    <property type="entry name" value="Lipoyl_synth"/>
    <property type="match status" value="1"/>
</dbReference>
<dbReference type="InterPro" id="IPR013785">
    <property type="entry name" value="Aldolase_TIM"/>
</dbReference>
<dbReference type="InterPro" id="IPR006638">
    <property type="entry name" value="Elp3/MiaA/NifB-like_rSAM"/>
</dbReference>
<dbReference type="InterPro" id="IPR003698">
    <property type="entry name" value="Lipoyl_synth"/>
</dbReference>
<dbReference type="InterPro" id="IPR007197">
    <property type="entry name" value="rSAM"/>
</dbReference>
<dbReference type="NCBIfam" id="TIGR00510">
    <property type="entry name" value="lipA"/>
    <property type="match status" value="1"/>
</dbReference>
<dbReference type="NCBIfam" id="NF004019">
    <property type="entry name" value="PRK05481.1"/>
    <property type="match status" value="1"/>
</dbReference>
<dbReference type="NCBIfam" id="NF009544">
    <property type="entry name" value="PRK12928.1"/>
    <property type="match status" value="1"/>
</dbReference>
<dbReference type="PANTHER" id="PTHR10949">
    <property type="entry name" value="LIPOYL SYNTHASE"/>
    <property type="match status" value="1"/>
</dbReference>
<dbReference type="PANTHER" id="PTHR10949:SF0">
    <property type="entry name" value="LIPOYL SYNTHASE, MITOCHONDRIAL"/>
    <property type="match status" value="1"/>
</dbReference>
<dbReference type="Pfam" id="PF04055">
    <property type="entry name" value="Radical_SAM"/>
    <property type="match status" value="1"/>
</dbReference>
<dbReference type="PIRSF" id="PIRSF005963">
    <property type="entry name" value="Lipoyl_synth"/>
    <property type="match status" value="1"/>
</dbReference>
<dbReference type="SFLD" id="SFLDF00271">
    <property type="entry name" value="lipoyl_synthase"/>
    <property type="match status" value="1"/>
</dbReference>
<dbReference type="SFLD" id="SFLDS00029">
    <property type="entry name" value="Radical_SAM"/>
    <property type="match status" value="1"/>
</dbReference>
<dbReference type="SMART" id="SM00729">
    <property type="entry name" value="Elp3"/>
    <property type="match status" value="1"/>
</dbReference>
<dbReference type="SUPFAM" id="SSF102114">
    <property type="entry name" value="Radical SAM enzymes"/>
    <property type="match status" value="1"/>
</dbReference>
<dbReference type="PROSITE" id="PS51918">
    <property type="entry name" value="RADICAL_SAM"/>
    <property type="match status" value="1"/>
</dbReference>
<accession>A4SEG3</accession>
<keyword id="KW-0004">4Fe-4S</keyword>
<keyword id="KW-0963">Cytoplasm</keyword>
<keyword id="KW-0408">Iron</keyword>
<keyword id="KW-0411">Iron-sulfur</keyword>
<keyword id="KW-0479">Metal-binding</keyword>
<keyword id="KW-0949">S-adenosyl-L-methionine</keyword>
<keyword id="KW-0808">Transferase</keyword>
<feature type="chain" id="PRO_1000077963" description="Lipoyl synthase">
    <location>
        <begin position="1"/>
        <end position="284"/>
    </location>
</feature>
<feature type="domain" description="Radical SAM core" evidence="2">
    <location>
        <begin position="50"/>
        <end position="266"/>
    </location>
</feature>
<feature type="binding site" evidence="1">
    <location>
        <position position="38"/>
    </location>
    <ligand>
        <name>[4Fe-4S] cluster</name>
        <dbReference type="ChEBI" id="CHEBI:49883"/>
        <label>1</label>
    </ligand>
</feature>
<feature type="binding site" evidence="1">
    <location>
        <position position="43"/>
    </location>
    <ligand>
        <name>[4Fe-4S] cluster</name>
        <dbReference type="ChEBI" id="CHEBI:49883"/>
        <label>1</label>
    </ligand>
</feature>
<feature type="binding site" evidence="1">
    <location>
        <position position="49"/>
    </location>
    <ligand>
        <name>[4Fe-4S] cluster</name>
        <dbReference type="ChEBI" id="CHEBI:49883"/>
        <label>1</label>
    </ligand>
</feature>
<feature type="binding site" evidence="1">
    <location>
        <position position="64"/>
    </location>
    <ligand>
        <name>[4Fe-4S] cluster</name>
        <dbReference type="ChEBI" id="CHEBI:49883"/>
        <label>2</label>
        <note>4Fe-4S-S-AdoMet</note>
    </ligand>
</feature>
<feature type="binding site" evidence="1">
    <location>
        <position position="68"/>
    </location>
    <ligand>
        <name>[4Fe-4S] cluster</name>
        <dbReference type="ChEBI" id="CHEBI:49883"/>
        <label>2</label>
        <note>4Fe-4S-S-AdoMet</note>
    </ligand>
</feature>
<feature type="binding site" evidence="1">
    <location>
        <position position="71"/>
    </location>
    <ligand>
        <name>[4Fe-4S] cluster</name>
        <dbReference type="ChEBI" id="CHEBI:49883"/>
        <label>2</label>
        <note>4Fe-4S-S-AdoMet</note>
    </ligand>
</feature>
<feature type="binding site" evidence="1">
    <location>
        <position position="277"/>
    </location>
    <ligand>
        <name>[4Fe-4S] cluster</name>
        <dbReference type="ChEBI" id="CHEBI:49883"/>
        <label>1</label>
    </ligand>
</feature>
<organism>
    <name type="scientific">Chlorobium phaeovibrioides (strain DSM 265 / 1930)</name>
    <name type="common">Prosthecochloris vibrioformis (strain DSM 265)</name>
    <dbReference type="NCBI Taxonomy" id="290318"/>
    <lineage>
        <taxon>Bacteria</taxon>
        <taxon>Pseudomonadati</taxon>
        <taxon>Chlorobiota</taxon>
        <taxon>Chlorobiia</taxon>
        <taxon>Chlorobiales</taxon>
        <taxon>Chlorobiaceae</taxon>
        <taxon>Chlorobium/Pelodictyon group</taxon>
        <taxon>Chlorobium</taxon>
    </lineage>
</organism>
<name>LIPA_CHLPM</name>
<sequence>MPGQRLRKPEWLKLRMRTGPEFGDIQRLLSETSLNTVCRSAMCPNLQECWSRGTATFLLLGNVCTRSCRFCAIGTQQKPIPPDPKEPARIAGAVTAMKLNFVVLTSVNRDDLPDGGARHWTETMKAIRLSSPDAGLECLIPDFEGNDEALDMVMNERPDVLNHNIETVPRLYTNVRPEASYNQSLSILDRALTLHGLATKSGMMVGMGETFEEVVASMKDLREAGCSRLTIGQYLQPTASHFPVERYVPPEEFDAYRDEALGMGFSTVQSGPFVRSSYLAGSEE</sequence>
<protein>
    <recommendedName>
        <fullName evidence="1">Lipoyl synthase</fullName>
        <ecNumber evidence="1">2.8.1.8</ecNumber>
    </recommendedName>
    <alternativeName>
        <fullName evidence="1">Lip-syn</fullName>
        <shortName evidence="1">LS</shortName>
    </alternativeName>
    <alternativeName>
        <fullName evidence="1">Lipoate synthase</fullName>
    </alternativeName>
    <alternativeName>
        <fullName evidence="1">Lipoic acid synthase</fullName>
    </alternativeName>
    <alternativeName>
        <fullName evidence="1">Sulfur insertion protein LipA</fullName>
    </alternativeName>
</protein>
<proteinExistence type="inferred from homology"/>
<comment type="function">
    <text evidence="1">Catalyzes the radical-mediated insertion of two sulfur atoms into the C-6 and C-8 positions of the octanoyl moiety bound to the lipoyl domains of lipoate-dependent enzymes, thereby converting the octanoylated domains into lipoylated derivatives.</text>
</comment>
<comment type="catalytic activity">
    <reaction evidence="1">
        <text>[[Fe-S] cluster scaffold protein carrying a second [4Fe-4S](2+) cluster] + N(6)-octanoyl-L-lysyl-[protein] + 2 oxidized [2Fe-2S]-[ferredoxin] + 2 S-adenosyl-L-methionine + 4 H(+) = [[Fe-S] cluster scaffold protein] + N(6)-[(R)-dihydrolipoyl]-L-lysyl-[protein] + 4 Fe(3+) + 2 hydrogen sulfide + 2 5'-deoxyadenosine + 2 L-methionine + 2 reduced [2Fe-2S]-[ferredoxin]</text>
        <dbReference type="Rhea" id="RHEA:16585"/>
        <dbReference type="Rhea" id="RHEA-COMP:9928"/>
        <dbReference type="Rhea" id="RHEA-COMP:10000"/>
        <dbReference type="Rhea" id="RHEA-COMP:10001"/>
        <dbReference type="Rhea" id="RHEA-COMP:10475"/>
        <dbReference type="Rhea" id="RHEA-COMP:14568"/>
        <dbReference type="Rhea" id="RHEA-COMP:14569"/>
        <dbReference type="ChEBI" id="CHEBI:15378"/>
        <dbReference type="ChEBI" id="CHEBI:17319"/>
        <dbReference type="ChEBI" id="CHEBI:29034"/>
        <dbReference type="ChEBI" id="CHEBI:29919"/>
        <dbReference type="ChEBI" id="CHEBI:33722"/>
        <dbReference type="ChEBI" id="CHEBI:33737"/>
        <dbReference type="ChEBI" id="CHEBI:33738"/>
        <dbReference type="ChEBI" id="CHEBI:57844"/>
        <dbReference type="ChEBI" id="CHEBI:59789"/>
        <dbReference type="ChEBI" id="CHEBI:78809"/>
        <dbReference type="ChEBI" id="CHEBI:83100"/>
        <dbReference type="EC" id="2.8.1.8"/>
    </reaction>
</comment>
<comment type="cofactor">
    <cofactor evidence="1">
        <name>[4Fe-4S] cluster</name>
        <dbReference type="ChEBI" id="CHEBI:49883"/>
    </cofactor>
    <text evidence="1">Binds 2 [4Fe-4S] clusters per subunit. One cluster is coordinated with 3 cysteines and an exchangeable S-adenosyl-L-methionine.</text>
</comment>
<comment type="pathway">
    <text evidence="1">Protein modification; protein lipoylation via endogenous pathway; protein N(6)-(lipoyl)lysine from octanoyl-[acyl-carrier-protein]: step 2/2.</text>
</comment>
<comment type="subcellular location">
    <subcellularLocation>
        <location evidence="1">Cytoplasm</location>
    </subcellularLocation>
</comment>
<comment type="similarity">
    <text evidence="1">Belongs to the radical SAM superfamily. Lipoyl synthase family.</text>
</comment>
<evidence type="ECO:0000255" key="1">
    <source>
        <dbReference type="HAMAP-Rule" id="MF_00206"/>
    </source>
</evidence>
<evidence type="ECO:0000255" key="2">
    <source>
        <dbReference type="PROSITE-ProRule" id="PRU01266"/>
    </source>
</evidence>